<evidence type="ECO:0000255" key="1">
    <source>
        <dbReference type="HAMAP-Rule" id="MF_02076"/>
    </source>
</evidence>
<name>SYE_METBF</name>
<reference key="1">
    <citation type="journal article" date="2006" name="J. Bacteriol.">
        <title>The Methanosarcina barkeri genome: comparative analysis with Methanosarcina acetivorans and Methanosarcina mazei reveals extensive rearrangement within methanosarcinal genomes.</title>
        <authorList>
            <person name="Maeder D.L."/>
            <person name="Anderson I."/>
            <person name="Brettin T.S."/>
            <person name="Bruce D.C."/>
            <person name="Gilna P."/>
            <person name="Han C.S."/>
            <person name="Lapidus A."/>
            <person name="Metcalf W.W."/>
            <person name="Saunders E."/>
            <person name="Tapia R."/>
            <person name="Sowers K.R."/>
        </authorList>
    </citation>
    <scope>NUCLEOTIDE SEQUENCE [LARGE SCALE GENOMIC DNA]</scope>
    <source>
        <strain>Fusaro / DSM 804</strain>
    </source>
</reference>
<gene>
    <name evidence="1" type="primary">gltX</name>
    <name type="ordered locus">Mbar_A1470</name>
</gene>
<organism>
    <name type="scientific">Methanosarcina barkeri (strain Fusaro / DSM 804)</name>
    <dbReference type="NCBI Taxonomy" id="269797"/>
    <lineage>
        <taxon>Archaea</taxon>
        <taxon>Methanobacteriati</taxon>
        <taxon>Methanobacteriota</taxon>
        <taxon>Stenosarchaea group</taxon>
        <taxon>Methanomicrobia</taxon>
        <taxon>Methanosarcinales</taxon>
        <taxon>Methanosarcinaceae</taxon>
        <taxon>Methanosarcina</taxon>
    </lineage>
</organism>
<comment type="function">
    <text evidence="1">Catalyzes the attachment of glutamate to tRNA(Glu) in a two-step reaction: glutamate is first activated by ATP to form Glu-AMP and then transferred to the acceptor end of tRNA(Glu).</text>
</comment>
<comment type="catalytic activity">
    <reaction evidence="1">
        <text>tRNA(Glu) + L-glutamate + ATP = L-glutamyl-tRNA(Glu) + AMP + diphosphate</text>
        <dbReference type="Rhea" id="RHEA:23540"/>
        <dbReference type="Rhea" id="RHEA-COMP:9663"/>
        <dbReference type="Rhea" id="RHEA-COMP:9680"/>
        <dbReference type="ChEBI" id="CHEBI:29985"/>
        <dbReference type="ChEBI" id="CHEBI:30616"/>
        <dbReference type="ChEBI" id="CHEBI:33019"/>
        <dbReference type="ChEBI" id="CHEBI:78442"/>
        <dbReference type="ChEBI" id="CHEBI:78520"/>
        <dbReference type="ChEBI" id="CHEBI:456215"/>
        <dbReference type="EC" id="6.1.1.17"/>
    </reaction>
</comment>
<comment type="subcellular location">
    <subcellularLocation>
        <location evidence="1">Cytoplasm</location>
    </subcellularLocation>
</comment>
<comment type="similarity">
    <text evidence="1">Belongs to the class-I aminoacyl-tRNA synthetase family. Glutamate--tRNA ligase type 2 subfamily.</text>
</comment>
<dbReference type="EC" id="6.1.1.17" evidence="1"/>
<dbReference type="EMBL" id="CP000099">
    <property type="protein sequence ID" value="AAZ70427.1"/>
    <property type="molecule type" value="Genomic_DNA"/>
</dbReference>
<dbReference type="SMR" id="Q46CG5"/>
<dbReference type="STRING" id="269797.Mbar_A1470"/>
<dbReference type="PaxDb" id="269797-Mbar_A1470"/>
<dbReference type="KEGG" id="mba:Mbar_A1470"/>
<dbReference type="eggNOG" id="arCOG04302">
    <property type="taxonomic scope" value="Archaea"/>
</dbReference>
<dbReference type="HOGENOM" id="CLU_001882_1_3_2"/>
<dbReference type="OrthoDB" id="10470at2157"/>
<dbReference type="GO" id="GO:0005829">
    <property type="term" value="C:cytosol"/>
    <property type="evidence" value="ECO:0007669"/>
    <property type="project" value="TreeGrafter"/>
</dbReference>
<dbReference type="GO" id="GO:0005524">
    <property type="term" value="F:ATP binding"/>
    <property type="evidence" value="ECO:0007669"/>
    <property type="project" value="UniProtKB-UniRule"/>
</dbReference>
<dbReference type="GO" id="GO:0004818">
    <property type="term" value="F:glutamate-tRNA ligase activity"/>
    <property type="evidence" value="ECO:0007669"/>
    <property type="project" value="UniProtKB-UniRule"/>
</dbReference>
<dbReference type="GO" id="GO:0043604">
    <property type="term" value="P:amide biosynthetic process"/>
    <property type="evidence" value="ECO:0007669"/>
    <property type="project" value="TreeGrafter"/>
</dbReference>
<dbReference type="GO" id="GO:0006424">
    <property type="term" value="P:glutamyl-tRNA aminoacylation"/>
    <property type="evidence" value="ECO:0007669"/>
    <property type="project" value="UniProtKB-UniRule"/>
</dbReference>
<dbReference type="CDD" id="cd09287">
    <property type="entry name" value="GluRS_non_core"/>
    <property type="match status" value="1"/>
</dbReference>
<dbReference type="FunFam" id="2.40.240.10:FF:000033">
    <property type="entry name" value="Glutamate--tRNA ligase"/>
    <property type="match status" value="1"/>
</dbReference>
<dbReference type="FunFam" id="3.40.50.620:FF:000222">
    <property type="entry name" value="Glutamate--tRNA ligase"/>
    <property type="match status" value="1"/>
</dbReference>
<dbReference type="Gene3D" id="2.40.240.100">
    <property type="match status" value="1"/>
</dbReference>
<dbReference type="Gene3D" id="3.40.50.620">
    <property type="entry name" value="HUPs"/>
    <property type="match status" value="1"/>
</dbReference>
<dbReference type="Gene3D" id="2.40.240.10">
    <property type="entry name" value="Ribosomal Protein L25, Chain P"/>
    <property type="match status" value="1"/>
</dbReference>
<dbReference type="HAMAP" id="MF_02076">
    <property type="entry name" value="Glu_tRNA_synth_type2"/>
    <property type="match status" value="1"/>
</dbReference>
<dbReference type="InterPro" id="IPR050132">
    <property type="entry name" value="Gln/Glu-tRNA_Ligase"/>
</dbReference>
<dbReference type="InterPro" id="IPR004526">
    <property type="entry name" value="Glu-tRNA-synth_arc/euk"/>
</dbReference>
<dbReference type="InterPro" id="IPR000924">
    <property type="entry name" value="Glu/Gln-tRNA-synth"/>
</dbReference>
<dbReference type="InterPro" id="IPR020058">
    <property type="entry name" value="Glu/Gln-tRNA-synth_Ib_cat-dom"/>
</dbReference>
<dbReference type="InterPro" id="IPR020059">
    <property type="entry name" value="Glu/Gln-tRNA-synth_Ib_codon-bd"/>
</dbReference>
<dbReference type="InterPro" id="IPR020056">
    <property type="entry name" value="Rbsml_bL25/Gln-tRNA_synth_N"/>
</dbReference>
<dbReference type="InterPro" id="IPR011035">
    <property type="entry name" value="Ribosomal_bL25/Gln-tRNA_synth"/>
</dbReference>
<dbReference type="InterPro" id="IPR014729">
    <property type="entry name" value="Rossmann-like_a/b/a_fold"/>
</dbReference>
<dbReference type="NCBIfam" id="TIGR00463">
    <property type="entry name" value="gltX_arch"/>
    <property type="match status" value="1"/>
</dbReference>
<dbReference type="NCBIfam" id="NF003169">
    <property type="entry name" value="PRK04156.1"/>
    <property type="match status" value="1"/>
</dbReference>
<dbReference type="PANTHER" id="PTHR43097:SF5">
    <property type="entry name" value="GLUTAMATE--TRNA LIGASE"/>
    <property type="match status" value="1"/>
</dbReference>
<dbReference type="PANTHER" id="PTHR43097">
    <property type="entry name" value="GLUTAMINE-TRNA LIGASE"/>
    <property type="match status" value="1"/>
</dbReference>
<dbReference type="Pfam" id="PF00749">
    <property type="entry name" value="tRNA-synt_1c"/>
    <property type="match status" value="1"/>
</dbReference>
<dbReference type="Pfam" id="PF03950">
    <property type="entry name" value="tRNA-synt_1c_C"/>
    <property type="match status" value="1"/>
</dbReference>
<dbReference type="PRINTS" id="PR00987">
    <property type="entry name" value="TRNASYNTHGLU"/>
</dbReference>
<dbReference type="SUPFAM" id="SSF52374">
    <property type="entry name" value="Nucleotidylyl transferase"/>
    <property type="match status" value="1"/>
</dbReference>
<dbReference type="SUPFAM" id="SSF50715">
    <property type="entry name" value="Ribosomal protein L25-like"/>
    <property type="match status" value="1"/>
</dbReference>
<protein>
    <recommendedName>
        <fullName evidence="1">Glutamate--tRNA ligase</fullName>
        <ecNumber evidence="1">6.1.1.17</ecNumber>
    </recommendedName>
    <alternativeName>
        <fullName evidence="1">Glutamyl-tRNA synthetase</fullName>
        <shortName evidence="1">GluRS</shortName>
    </alternativeName>
</protein>
<proteinExistence type="inferred from homology"/>
<keyword id="KW-0030">Aminoacyl-tRNA synthetase</keyword>
<keyword id="KW-0067">ATP-binding</keyword>
<keyword id="KW-0963">Cytoplasm</keyword>
<keyword id="KW-0436">Ligase</keyword>
<keyword id="KW-0547">Nucleotide-binding</keyword>
<keyword id="KW-0648">Protein biosynthesis</keyword>
<sequence>MTLSPEDLKTIEKYAYQNAVKYGKAPQPKAVMGKVMGECPQLRSDPNAVSEALKVIIPEIAKGNPETWETKLSEIAPELIEALSVKKEPDKGLKPLEGAENGKVVMRFAPNPNGPATLGSARGMVVNSEYVKMYGGKFVLRFDDTDPDIKRPLLQAYDWYLDDFKWLGVVPDQVVYASDHFPMYYDYARKLIEMGKAYVCFCKGGDFKRFKDAKQSCPHRDTSPEENLMHWEKMLAGEYEDQQAVLRIKTDIKHKDPALRDWGAFRIRKMSHPRPEIGNKYVVWPLLDFAGAIEDHELGMTHIIRGKDLIDSEKRQGYIYKYFGWKYPRTTNWGRVKIHEFGKFSTSTLRKAIEAGEYSGWDDPRLPTIRAIRRRGIQAEALKKFMIEMGVGMTDVSISMESLYAENRKIVDPIANRYFFVWNPVELEITDAEPTVAKLPLHPTDHKRGFREIAVGNKVLVCTEDVEKLEVGSIIRLKDFCNIEITSLSPLQAKLSDVSLEALKKAKAKIIHWAPLDGINVKVRGPEGDLNGIGEQGIAAELDKIVQFERFGFCRIDAVSEDEIVAYFAHK</sequence>
<feature type="chain" id="PRO_0000237422" description="Glutamate--tRNA ligase">
    <location>
        <begin position="1"/>
        <end position="571"/>
    </location>
</feature>
<feature type="short sequence motif" description="'HIGH' region" evidence="1">
    <location>
        <begin position="110"/>
        <end position="120"/>
    </location>
</feature>
<accession>Q46CG5</accession>